<name>RL2_PROM9</name>
<dbReference type="EMBL" id="CP000111">
    <property type="protein sequence ID" value="ABB50708.1"/>
    <property type="molecule type" value="Genomic_DNA"/>
</dbReference>
<dbReference type="RefSeq" id="WP_011377189.1">
    <property type="nucleotide sequence ID" value="NC_007577.1"/>
</dbReference>
<dbReference type="SMR" id="Q318I7"/>
<dbReference type="STRING" id="74546.PMT9312_1647"/>
<dbReference type="KEGG" id="pmi:PMT9312_1647"/>
<dbReference type="eggNOG" id="COG0090">
    <property type="taxonomic scope" value="Bacteria"/>
</dbReference>
<dbReference type="HOGENOM" id="CLU_036235_2_1_3"/>
<dbReference type="OrthoDB" id="9778722at2"/>
<dbReference type="Proteomes" id="UP000002715">
    <property type="component" value="Chromosome"/>
</dbReference>
<dbReference type="GO" id="GO:0015934">
    <property type="term" value="C:large ribosomal subunit"/>
    <property type="evidence" value="ECO:0007669"/>
    <property type="project" value="InterPro"/>
</dbReference>
<dbReference type="GO" id="GO:0019843">
    <property type="term" value="F:rRNA binding"/>
    <property type="evidence" value="ECO:0007669"/>
    <property type="project" value="UniProtKB-UniRule"/>
</dbReference>
<dbReference type="GO" id="GO:0003735">
    <property type="term" value="F:structural constituent of ribosome"/>
    <property type="evidence" value="ECO:0007669"/>
    <property type="project" value="InterPro"/>
</dbReference>
<dbReference type="GO" id="GO:0016740">
    <property type="term" value="F:transferase activity"/>
    <property type="evidence" value="ECO:0007669"/>
    <property type="project" value="InterPro"/>
</dbReference>
<dbReference type="GO" id="GO:0006412">
    <property type="term" value="P:translation"/>
    <property type="evidence" value="ECO:0007669"/>
    <property type="project" value="UniProtKB-UniRule"/>
</dbReference>
<dbReference type="FunFam" id="2.30.30.30:FF:000001">
    <property type="entry name" value="50S ribosomal protein L2"/>
    <property type="match status" value="1"/>
</dbReference>
<dbReference type="FunFam" id="2.40.50.140:FF:000003">
    <property type="entry name" value="50S ribosomal protein L2"/>
    <property type="match status" value="1"/>
</dbReference>
<dbReference type="FunFam" id="4.10.950.10:FF:000001">
    <property type="entry name" value="50S ribosomal protein L2"/>
    <property type="match status" value="1"/>
</dbReference>
<dbReference type="Gene3D" id="2.30.30.30">
    <property type="match status" value="1"/>
</dbReference>
<dbReference type="Gene3D" id="2.40.50.140">
    <property type="entry name" value="Nucleic acid-binding proteins"/>
    <property type="match status" value="1"/>
</dbReference>
<dbReference type="Gene3D" id="4.10.950.10">
    <property type="entry name" value="Ribosomal protein L2, domain 3"/>
    <property type="match status" value="1"/>
</dbReference>
<dbReference type="HAMAP" id="MF_01320_B">
    <property type="entry name" value="Ribosomal_uL2_B"/>
    <property type="match status" value="1"/>
</dbReference>
<dbReference type="InterPro" id="IPR012340">
    <property type="entry name" value="NA-bd_OB-fold"/>
</dbReference>
<dbReference type="InterPro" id="IPR014722">
    <property type="entry name" value="Rib_uL2_dom2"/>
</dbReference>
<dbReference type="InterPro" id="IPR002171">
    <property type="entry name" value="Ribosomal_uL2"/>
</dbReference>
<dbReference type="InterPro" id="IPR005880">
    <property type="entry name" value="Ribosomal_uL2_bac/org-type"/>
</dbReference>
<dbReference type="InterPro" id="IPR022669">
    <property type="entry name" value="Ribosomal_uL2_C"/>
</dbReference>
<dbReference type="InterPro" id="IPR022671">
    <property type="entry name" value="Ribosomal_uL2_CS"/>
</dbReference>
<dbReference type="InterPro" id="IPR014726">
    <property type="entry name" value="Ribosomal_uL2_dom3"/>
</dbReference>
<dbReference type="InterPro" id="IPR022666">
    <property type="entry name" value="Ribosomal_uL2_RNA-bd_dom"/>
</dbReference>
<dbReference type="InterPro" id="IPR008991">
    <property type="entry name" value="Translation_prot_SH3-like_sf"/>
</dbReference>
<dbReference type="NCBIfam" id="TIGR01171">
    <property type="entry name" value="rplB_bact"/>
    <property type="match status" value="1"/>
</dbReference>
<dbReference type="PANTHER" id="PTHR13691:SF5">
    <property type="entry name" value="LARGE RIBOSOMAL SUBUNIT PROTEIN UL2M"/>
    <property type="match status" value="1"/>
</dbReference>
<dbReference type="PANTHER" id="PTHR13691">
    <property type="entry name" value="RIBOSOMAL PROTEIN L2"/>
    <property type="match status" value="1"/>
</dbReference>
<dbReference type="Pfam" id="PF00181">
    <property type="entry name" value="Ribosomal_L2"/>
    <property type="match status" value="1"/>
</dbReference>
<dbReference type="Pfam" id="PF03947">
    <property type="entry name" value="Ribosomal_L2_C"/>
    <property type="match status" value="1"/>
</dbReference>
<dbReference type="PIRSF" id="PIRSF002158">
    <property type="entry name" value="Ribosomal_L2"/>
    <property type="match status" value="1"/>
</dbReference>
<dbReference type="SMART" id="SM01383">
    <property type="entry name" value="Ribosomal_L2"/>
    <property type="match status" value="1"/>
</dbReference>
<dbReference type="SMART" id="SM01382">
    <property type="entry name" value="Ribosomal_L2_C"/>
    <property type="match status" value="1"/>
</dbReference>
<dbReference type="SUPFAM" id="SSF50249">
    <property type="entry name" value="Nucleic acid-binding proteins"/>
    <property type="match status" value="1"/>
</dbReference>
<dbReference type="SUPFAM" id="SSF50104">
    <property type="entry name" value="Translation proteins SH3-like domain"/>
    <property type="match status" value="1"/>
</dbReference>
<dbReference type="PROSITE" id="PS00467">
    <property type="entry name" value="RIBOSOMAL_L2"/>
    <property type="match status" value="1"/>
</dbReference>
<organism>
    <name type="scientific">Prochlorococcus marinus (strain MIT 9312)</name>
    <dbReference type="NCBI Taxonomy" id="74546"/>
    <lineage>
        <taxon>Bacteria</taxon>
        <taxon>Bacillati</taxon>
        <taxon>Cyanobacteriota</taxon>
        <taxon>Cyanophyceae</taxon>
        <taxon>Synechococcales</taxon>
        <taxon>Prochlorococcaceae</taxon>
        <taxon>Prochlorococcus</taxon>
    </lineage>
</organism>
<sequence>MAIRKFKPYTPGTRQRVVTDFSEITSAKPERSLIVSKHRVKGRNNRGVITCRHRGGGHKRQYRLVDFRRDKRNINAKVAAIHYDPHRNARLALLFYEDGEKRYIIAPAGVKVGQNVISGESVPIEDGNAMPLSVMPLGSSVHCVELYAGRGAQMVRSAGASAQVMAKEGDYVALKLPSTEVRLVRKECYATLGEVGNSEIRNTSLGKAGRRRWLGRRPQVRGSVMNPCDHPHGGGEGKAPIGRAGPVTPWGKPALGLKTRKKNKPSNKLVVRRRRRISKRSRGGRDS</sequence>
<keyword id="KW-0687">Ribonucleoprotein</keyword>
<keyword id="KW-0689">Ribosomal protein</keyword>
<keyword id="KW-0694">RNA-binding</keyword>
<keyword id="KW-0699">rRNA-binding</keyword>
<accession>Q318I7</accession>
<reference key="1">
    <citation type="journal article" date="2006" name="Science">
        <title>Genomic islands and the ecology and evolution of Prochlorococcus.</title>
        <authorList>
            <person name="Coleman M.L."/>
            <person name="Sullivan M.B."/>
            <person name="Martiny A.C."/>
            <person name="Steglich C."/>
            <person name="Barry K."/>
            <person name="Delong E.F."/>
            <person name="Chisholm S.W."/>
        </authorList>
    </citation>
    <scope>NUCLEOTIDE SEQUENCE [LARGE SCALE GENOMIC DNA]</scope>
    <source>
        <strain>MIT 9312</strain>
    </source>
</reference>
<evidence type="ECO:0000255" key="1">
    <source>
        <dbReference type="HAMAP-Rule" id="MF_01320"/>
    </source>
</evidence>
<evidence type="ECO:0000256" key="2">
    <source>
        <dbReference type="SAM" id="MobiDB-lite"/>
    </source>
</evidence>
<evidence type="ECO:0000305" key="3"/>
<gene>
    <name evidence="1" type="primary">rplB</name>
    <name evidence="1" type="synonym">rpl2</name>
    <name type="ordered locus">PMT9312_1647</name>
</gene>
<proteinExistence type="inferred from homology"/>
<comment type="function">
    <text evidence="1">One of the primary rRNA binding proteins. Required for association of the 30S and 50S subunits to form the 70S ribosome, for tRNA binding and peptide bond formation. It has been suggested to have peptidyltransferase activity; this is somewhat controversial. Makes several contacts with the 16S rRNA in the 70S ribosome.</text>
</comment>
<comment type="subunit">
    <text evidence="1">Part of the 50S ribosomal subunit. Forms a bridge to the 30S subunit in the 70S ribosome.</text>
</comment>
<comment type="similarity">
    <text evidence="1">Belongs to the universal ribosomal protein uL2 family.</text>
</comment>
<protein>
    <recommendedName>
        <fullName evidence="1">Large ribosomal subunit protein uL2</fullName>
    </recommendedName>
    <alternativeName>
        <fullName evidence="3">50S ribosomal protein L2</fullName>
    </alternativeName>
</protein>
<feature type="chain" id="PRO_0000237223" description="Large ribosomal subunit protein uL2">
    <location>
        <begin position="1"/>
        <end position="287"/>
    </location>
</feature>
<feature type="region of interest" description="Disordered" evidence="2">
    <location>
        <begin position="221"/>
        <end position="287"/>
    </location>
</feature>
<feature type="compositionally biased region" description="Basic residues" evidence="2">
    <location>
        <begin position="258"/>
        <end position="287"/>
    </location>
</feature>